<reference key="1">
    <citation type="journal article" date="2003" name="Nat. Biotechnol.">
        <title>The genome sequence of the entomopathogenic bacterium Photorhabdus luminescens.</title>
        <authorList>
            <person name="Duchaud E."/>
            <person name="Rusniok C."/>
            <person name="Frangeul L."/>
            <person name="Buchrieser C."/>
            <person name="Givaudan A."/>
            <person name="Taourit S."/>
            <person name="Bocs S."/>
            <person name="Boursaux-Eude C."/>
            <person name="Chandler M."/>
            <person name="Charles J.-F."/>
            <person name="Dassa E."/>
            <person name="Derose R."/>
            <person name="Derzelle S."/>
            <person name="Freyssinet G."/>
            <person name="Gaudriault S."/>
            <person name="Medigue C."/>
            <person name="Lanois A."/>
            <person name="Powell K."/>
            <person name="Siguier P."/>
            <person name="Vincent R."/>
            <person name="Wingate V."/>
            <person name="Zouine M."/>
            <person name="Glaser P."/>
            <person name="Boemare N."/>
            <person name="Danchin A."/>
            <person name="Kunst F."/>
        </authorList>
    </citation>
    <scope>NUCLEOTIDE SEQUENCE [LARGE SCALE GENOMIC DNA]</scope>
    <source>
        <strain>DSM 15139 / CIP 105565 / TT01</strain>
    </source>
</reference>
<evidence type="ECO:0000255" key="1">
    <source>
        <dbReference type="HAMAP-Rule" id="MF_00737"/>
    </source>
</evidence>
<organism>
    <name type="scientific">Photorhabdus laumondii subsp. laumondii (strain DSM 15139 / CIP 105565 / TT01)</name>
    <name type="common">Photorhabdus luminescens subsp. laumondii</name>
    <dbReference type="NCBI Taxonomy" id="243265"/>
    <lineage>
        <taxon>Bacteria</taxon>
        <taxon>Pseudomonadati</taxon>
        <taxon>Pseudomonadota</taxon>
        <taxon>Gammaproteobacteria</taxon>
        <taxon>Enterobacterales</taxon>
        <taxon>Morganellaceae</taxon>
        <taxon>Photorhabdus</taxon>
    </lineage>
</organism>
<dbReference type="EC" id="3.5.3.8" evidence="1"/>
<dbReference type="EMBL" id="BX571869">
    <property type="protein sequence ID" value="CAE15570.1"/>
    <property type="molecule type" value="Genomic_DNA"/>
</dbReference>
<dbReference type="RefSeq" id="WP_011147403.1">
    <property type="nucleotide sequence ID" value="NC_005126.1"/>
</dbReference>
<dbReference type="SMR" id="P60110"/>
<dbReference type="STRING" id="243265.plu3196"/>
<dbReference type="GeneID" id="48849456"/>
<dbReference type="KEGG" id="plu:plu3196"/>
<dbReference type="eggNOG" id="COG0010">
    <property type="taxonomic scope" value="Bacteria"/>
</dbReference>
<dbReference type="HOGENOM" id="CLU_039478_2_0_6"/>
<dbReference type="OrthoDB" id="9789727at2"/>
<dbReference type="UniPathway" id="UPA00379">
    <property type="reaction ID" value="UER00552"/>
</dbReference>
<dbReference type="Proteomes" id="UP000002514">
    <property type="component" value="Chromosome"/>
</dbReference>
<dbReference type="GO" id="GO:0008783">
    <property type="term" value="F:agmatinase activity"/>
    <property type="evidence" value="ECO:0007669"/>
    <property type="project" value="TreeGrafter"/>
</dbReference>
<dbReference type="GO" id="GO:0050415">
    <property type="term" value="F:formimidoylglutamase activity"/>
    <property type="evidence" value="ECO:0007669"/>
    <property type="project" value="UniProtKB-UniRule"/>
</dbReference>
<dbReference type="GO" id="GO:0030145">
    <property type="term" value="F:manganese ion binding"/>
    <property type="evidence" value="ECO:0007669"/>
    <property type="project" value="UniProtKB-UniRule"/>
</dbReference>
<dbReference type="GO" id="GO:0019556">
    <property type="term" value="P:L-histidine catabolic process to glutamate and formamide"/>
    <property type="evidence" value="ECO:0007669"/>
    <property type="project" value="UniProtKB-UniPathway"/>
</dbReference>
<dbReference type="GO" id="GO:0019557">
    <property type="term" value="P:L-histidine catabolic process to glutamate and formate"/>
    <property type="evidence" value="ECO:0007669"/>
    <property type="project" value="UniProtKB-UniPathway"/>
</dbReference>
<dbReference type="GO" id="GO:0033389">
    <property type="term" value="P:putrescine biosynthetic process from arginine, via agmatine"/>
    <property type="evidence" value="ECO:0007669"/>
    <property type="project" value="TreeGrafter"/>
</dbReference>
<dbReference type="CDD" id="cd09988">
    <property type="entry name" value="Formimidoylglutamase"/>
    <property type="match status" value="1"/>
</dbReference>
<dbReference type="Gene3D" id="3.40.800.10">
    <property type="entry name" value="Ureohydrolase domain"/>
    <property type="match status" value="1"/>
</dbReference>
<dbReference type="HAMAP" id="MF_00737">
    <property type="entry name" value="Formimidoylglutam"/>
    <property type="match status" value="1"/>
</dbReference>
<dbReference type="InterPro" id="IPR005923">
    <property type="entry name" value="HutG"/>
</dbReference>
<dbReference type="InterPro" id="IPR006035">
    <property type="entry name" value="Ureohydrolase"/>
</dbReference>
<dbReference type="InterPro" id="IPR023696">
    <property type="entry name" value="Ureohydrolase_dom_sf"/>
</dbReference>
<dbReference type="InterPro" id="IPR020855">
    <property type="entry name" value="Ureohydrolase_Mn_BS"/>
</dbReference>
<dbReference type="NCBIfam" id="TIGR01227">
    <property type="entry name" value="hutG"/>
    <property type="match status" value="1"/>
</dbReference>
<dbReference type="PANTHER" id="PTHR11358">
    <property type="entry name" value="ARGINASE/AGMATINASE"/>
    <property type="match status" value="1"/>
</dbReference>
<dbReference type="PANTHER" id="PTHR11358:SF35">
    <property type="entry name" value="FORMIMIDOYLGLUTAMASE"/>
    <property type="match status" value="1"/>
</dbReference>
<dbReference type="Pfam" id="PF00491">
    <property type="entry name" value="Arginase"/>
    <property type="match status" value="1"/>
</dbReference>
<dbReference type="PIRSF" id="PIRSF036979">
    <property type="entry name" value="Arginase"/>
    <property type="match status" value="1"/>
</dbReference>
<dbReference type="PRINTS" id="PR00116">
    <property type="entry name" value="ARGINASE"/>
</dbReference>
<dbReference type="SUPFAM" id="SSF52768">
    <property type="entry name" value="Arginase/deacetylase"/>
    <property type="match status" value="1"/>
</dbReference>
<dbReference type="PROSITE" id="PS01053">
    <property type="entry name" value="ARGINASE_1"/>
    <property type="match status" value="1"/>
</dbReference>
<dbReference type="PROSITE" id="PS51409">
    <property type="entry name" value="ARGINASE_2"/>
    <property type="match status" value="1"/>
</dbReference>
<sequence>MNLWHATSPTIWQGRNDLAEADNALRLFQTVKLSPYFTPEEFSHYVALLGFECDEGVKRNQGRPGANQGPDYLRQSLANMASHKGHDKLVDLGSIRANPNQLSEAQQALSDAVTQCQCQNVRTLVLGGGHETAFAHGVGIYDAFPHQRVGIINFDAHLDLRRSPQPTSGTPFRQLAEYCQQHQRLFHYTCIGASLASNTQALVDEANRLNATIIWDNQCRETMLDKVQQQIQDILQQVDLIYMTIDLDVLPAYQMPAVSAPAALGLPLERLLQLIQPICQSGKLQAADLVELNPLFDIQGIGGRAAARLAWQLAHWWY</sequence>
<keyword id="KW-0369">Histidine metabolism</keyword>
<keyword id="KW-0378">Hydrolase</keyword>
<keyword id="KW-0464">Manganese</keyword>
<keyword id="KW-0479">Metal-binding</keyword>
<keyword id="KW-1185">Reference proteome</keyword>
<proteinExistence type="inferred from homology"/>
<gene>
    <name evidence="1" type="primary">hutG</name>
    <name type="ordered locus">plu3196</name>
</gene>
<feature type="chain" id="PRO_0000173761" description="Formimidoylglutamase">
    <location>
        <begin position="1"/>
        <end position="318"/>
    </location>
</feature>
<feature type="binding site" evidence="1">
    <location>
        <position position="130"/>
    </location>
    <ligand>
        <name>Mn(2+)</name>
        <dbReference type="ChEBI" id="CHEBI:29035"/>
        <label>1</label>
    </ligand>
</feature>
<feature type="binding site" evidence="1">
    <location>
        <position position="155"/>
    </location>
    <ligand>
        <name>Mn(2+)</name>
        <dbReference type="ChEBI" id="CHEBI:29035"/>
        <label>1</label>
    </ligand>
</feature>
<feature type="binding site" evidence="1">
    <location>
        <position position="155"/>
    </location>
    <ligand>
        <name>Mn(2+)</name>
        <dbReference type="ChEBI" id="CHEBI:29035"/>
        <label>2</label>
    </ligand>
</feature>
<feature type="binding site" evidence="1">
    <location>
        <position position="157"/>
    </location>
    <ligand>
        <name>Mn(2+)</name>
        <dbReference type="ChEBI" id="CHEBI:29035"/>
        <label>2</label>
    </ligand>
</feature>
<feature type="binding site" evidence="1">
    <location>
        <position position="159"/>
    </location>
    <ligand>
        <name>Mn(2+)</name>
        <dbReference type="ChEBI" id="CHEBI:29035"/>
        <label>1</label>
    </ligand>
</feature>
<feature type="binding site" evidence="1">
    <location>
        <position position="246"/>
    </location>
    <ligand>
        <name>Mn(2+)</name>
        <dbReference type="ChEBI" id="CHEBI:29035"/>
        <label>1</label>
    </ligand>
</feature>
<feature type="binding site" evidence="1">
    <location>
        <position position="246"/>
    </location>
    <ligand>
        <name>Mn(2+)</name>
        <dbReference type="ChEBI" id="CHEBI:29035"/>
        <label>2</label>
    </ligand>
</feature>
<feature type="binding site" evidence="1">
    <location>
        <position position="248"/>
    </location>
    <ligand>
        <name>Mn(2+)</name>
        <dbReference type="ChEBI" id="CHEBI:29035"/>
        <label>2</label>
    </ligand>
</feature>
<accession>P60110</accession>
<accession>Q7N292</accession>
<name>HUTG_PHOLL</name>
<protein>
    <recommendedName>
        <fullName evidence="1">Formimidoylglutamase</fullName>
        <ecNumber evidence="1">3.5.3.8</ecNumber>
    </recommendedName>
    <alternativeName>
        <fullName evidence="1">Formiminoglutamase</fullName>
    </alternativeName>
    <alternativeName>
        <fullName evidence="1">Formiminoglutamate hydrolase</fullName>
    </alternativeName>
</protein>
<comment type="function">
    <text evidence="1">Catalyzes the conversion of N-formimidoyl-L-glutamate to L-glutamate and formamide.</text>
</comment>
<comment type="catalytic activity">
    <reaction evidence="1">
        <text>N-formimidoyl-L-glutamate + H2O = formamide + L-glutamate</text>
        <dbReference type="Rhea" id="RHEA:22492"/>
        <dbReference type="ChEBI" id="CHEBI:15377"/>
        <dbReference type="ChEBI" id="CHEBI:16397"/>
        <dbReference type="ChEBI" id="CHEBI:29985"/>
        <dbReference type="ChEBI" id="CHEBI:58928"/>
        <dbReference type="EC" id="3.5.3.8"/>
    </reaction>
</comment>
<comment type="cofactor">
    <cofactor evidence="1">
        <name>Mn(2+)</name>
        <dbReference type="ChEBI" id="CHEBI:29035"/>
    </cofactor>
    <text evidence="1">Binds 2 manganese ions per subunit.</text>
</comment>
<comment type="pathway">
    <text evidence="1">Amino-acid degradation; L-histidine degradation into L-glutamate; L-glutamate from N-formimidoyl-L-glutamate (hydrolase route): step 1/1.</text>
</comment>
<comment type="similarity">
    <text evidence="1">Belongs to the arginase family.</text>
</comment>